<keyword id="KW-0007">Acetylation</keyword>
<keyword id="KW-0539">Nucleus</keyword>
<keyword id="KW-1185">Reference proteome</keyword>
<feature type="chain" id="PRO_0000406043" description="Transcription elongation factor A N-terminal and central domain-containing protein 2">
    <location>
        <begin position="1"/>
        <end position="208"/>
    </location>
</feature>
<feature type="domain" description="TFIIS N-terminal" evidence="2">
    <location>
        <begin position="40"/>
        <end position="114"/>
    </location>
</feature>
<feature type="domain" description="TFIIS central" evidence="3">
    <location>
        <begin position="131"/>
        <end position="208"/>
    </location>
</feature>
<feature type="region of interest" description="Disordered" evidence="4">
    <location>
        <begin position="1"/>
        <end position="22"/>
    </location>
</feature>
<feature type="modified residue" description="N-acetylmethionine" evidence="1">
    <location>
        <position position="1"/>
    </location>
</feature>
<reference key="1">
    <citation type="submission" date="2007-06" db="EMBL/GenBank/DDBJ databases">
        <authorList>
            <consortium name="NIH - Mammalian Gene Collection (MGC) project"/>
        </authorList>
    </citation>
    <scope>NUCLEOTIDE SEQUENCE [LARGE SCALE MRNA]</scope>
    <source>
        <strain>Hereford</strain>
        <tissue>Thymus</tissue>
    </source>
</reference>
<dbReference type="EMBL" id="BC142457">
    <property type="protein sequence ID" value="AAI42458.1"/>
    <property type="molecule type" value="mRNA"/>
</dbReference>
<dbReference type="RefSeq" id="NP_001098462.1">
    <property type="nucleotide sequence ID" value="NM_001104992.2"/>
</dbReference>
<dbReference type="SMR" id="A5PKE4"/>
<dbReference type="FunCoup" id="A5PKE4">
    <property type="interactions" value="1872"/>
</dbReference>
<dbReference type="STRING" id="9913.ENSBTAP00000012535"/>
<dbReference type="PaxDb" id="9913-ENSBTAP00000012535"/>
<dbReference type="GeneID" id="539385"/>
<dbReference type="KEGG" id="bta:539385"/>
<dbReference type="CTD" id="127428"/>
<dbReference type="eggNOG" id="KOG1105">
    <property type="taxonomic scope" value="Eukaryota"/>
</dbReference>
<dbReference type="InParanoid" id="A5PKE4"/>
<dbReference type="OrthoDB" id="44867at2759"/>
<dbReference type="Proteomes" id="UP000009136">
    <property type="component" value="Unplaced"/>
</dbReference>
<dbReference type="GO" id="GO:0005634">
    <property type="term" value="C:nucleus"/>
    <property type="evidence" value="ECO:0000318"/>
    <property type="project" value="GO_Central"/>
</dbReference>
<dbReference type="GO" id="GO:0006351">
    <property type="term" value="P:DNA-templated transcription"/>
    <property type="evidence" value="ECO:0007669"/>
    <property type="project" value="InterPro"/>
</dbReference>
<dbReference type="GO" id="GO:0006357">
    <property type="term" value="P:regulation of transcription by RNA polymerase II"/>
    <property type="evidence" value="ECO:0000318"/>
    <property type="project" value="GO_Central"/>
</dbReference>
<dbReference type="CDD" id="cd00183">
    <property type="entry name" value="TFIIS_I"/>
    <property type="match status" value="1"/>
</dbReference>
<dbReference type="Gene3D" id="1.20.930.10">
    <property type="entry name" value="Conserved domain common to transcription factors TFIIS, elongin A, CRSP70"/>
    <property type="match status" value="1"/>
</dbReference>
<dbReference type="Gene3D" id="1.10.472.30">
    <property type="entry name" value="Transcription elongation factor S-II, central domain"/>
    <property type="match status" value="1"/>
</dbReference>
<dbReference type="InterPro" id="IPR003617">
    <property type="entry name" value="TFIIS/CRSP70_N_sub"/>
</dbReference>
<dbReference type="InterPro" id="IPR035441">
    <property type="entry name" value="TFIIS/LEDGF_dom_sf"/>
</dbReference>
<dbReference type="InterPro" id="IPR003618">
    <property type="entry name" value="TFIIS_cen_dom"/>
</dbReference>
<dbReference type="InterPro" id="IPR036575">
    <property type="entry name" value="TFIIS_cen_dom_sf"/>
</dbReference>
<dbReference type="InterPro" id="IPR017923">
    <property type="entry name" value="TFIIS_N"/>
</dbReference>
<dbReference type="PANTHER" id="PTHR11477:SF14">
    <property type="entry name" value="TRANSCRIPTION ELONGATION FACTOR A N-TERMINAL AND CENTRAL DOMAIN-CONTAINING PROTEIN 2"/>
    <property type="match status" value="1"/>
</dbReference>
<dbReference type="PANTHER" id="PTHR11477">
    <property type="entry name" value="TRANSCRIPTION FACTOR S-II ZINC FINGER DOMAIN-CONTAINING PROTEIN"/>
    <property type="match status" value="1"/>
</dbReference>
<dbReference type="Pfam" id="PF08711">
    <property type="entry name" value="Med26"/>
    <property type="match status" value="1"/>
</dbReference>
<dbReference type="SMART" id="SM00509">
    <property type="entry name" value="TFS2N"/>
    <property type="match status" value="1"/>
</dbReference>
<dbReference type="SUPFAM" id="SSF47676">
    <property type="entry name" value="Conserved domain common to transcription factors TFIIS, elongin A, CRSP70"/>
    <property type="match status" value="1"/>
</dbReference>
<dbReference type="SUPFAM" id="SSF46942">
    <property type="entry name" value="Elongation factor TFIIS domain 2"/>
    <property type="match status" value="1"/>
</dbReference>
<dbReference type="PROSITE" id="PS51321">
    <property type="entry name" value="TFIIS_CENTRAL"/>
    <property type="match status" value="1"/>
</dbReference>
<dbReference type="PROSITE" id="PS51319">
    <property type="entry name" value="TFIIS_N"/>
    <property type="match status" value="1"/>
</dbReference>
<sequence>MDKFVIRTPRIQSSPQKKDPGGKIYKQATIESLKRVVVIEDIKRWKTMLELPDQSKENLVEALRELKKKIPSREVLKSTKIGHTVNKMRQHSDSEVACLAREVYTEWRTFIEKHVNRPSIEVRSDAKTETFRKNAQKLLSEALELEMDHLLVENIERETFHLCSRLINGPYRRTVRALVFTLKHRAEIREQVKSGMLPVGTFVQTHKK</sequence>
<gene>
    <name type="primary">TCEANC2</name>
</gene>
<name>TEAN2_BOVIN</name>
<proteinExistence type="evidence at transcript level"/>
<protein>
    <recommendedName>
        <fullName>Transcription elongation factor A N-terminal and central domain-containing protein 2</fullName>
    </recommendedName>
</protein>
<evidence type="ECO:0000250" key="1">
    <source>
        <dbReference type="UniProtKB" id="Q96MN5"/>
    </source>
</evidence>
<evidence type="ECO:0000255" key="2">
    <source>
        <dbReference type="PROSITE-ProRule" id="PRU00649"/>
    </source>
</evidence>
<evidence type="ECO:0000255" key="3">
    <source>
        <dbReference type="PROSITE-ProRule" id="PRU00651"/>
    </source>
</evidence>
<evidence type="ECO:0000256" key="4">
    <source>
        <dbReference type="SAM" id="MobiDB-lite"/>
    </source>
</evidence>
<evidence type="ECO:0000305" key="5"/>
<organism>
    <name type="scientific">Bos taurus</name>
    <name type="common">Bovine</name>
    <dbReference type="NCBI Taxonomy" id="9913"/>
    <lineage>
        <taxon>Eukaryota</taxon>
        <taxon>Metazoa</taxon>
        <taxon>Chordata</taxon>
        <taxon>Craniata</taxon>
        <taxon>Vertebrata</taxon>
        <taxon>Euteleostomi</taxon>
        <taxon>Mammalia</taxon>
        <taxon>Eutheria</taxon>
        <taxon>Laurasiatheria</taxon>
        <taxon>Artiodactyla</taxon>
        <taxon>Ruminantia</taxon>
        <taxon>Pecora</taxon>
        <taxon>Bovidae</taxon>
        <taxon>Bovinae</taxon>
        <taxon>Bos</taxon>
    </lineage>
</organism>
<accession>A5PKE4</accession>
<comment type="subcellular location">
    <subcellularLocation>
        <location evidence="2 3">Nucleus</location>
    </subcellularLocation>
</comment>
<comment type="similarity">
    <text evidence="5">Belongs to the TCEANC2 family.</text>
</comment>